<feature type="chain" id="PRO_0000151991" description="Leucine--tRNA ligase">
    <location>
        <begin position="1"/>
        <end position="864"/>
    </location>
</feature>
<feature type="short sequence motif" description="'HIGH' region">
    <location>
        <begin position="42"/>
        <end position="52"/>
    </location>
</feature>
<feature type="short sequence motif" description="'KMSKS' region">
    <location>
        <begin position="624"/>
        <end position="628"/>
    </location>
</feature>
<feature type="binding site" evidence="1">
    <location>
        <position position="627"/>
    </location>
    <ligand>
        <name>ATP</name>
        <dbReference type="ChEBI" id="CHEBI:30616"/>
    </ligand>
</feature>
<organism>
    <name type="scientific">Burkholderia pseudomallei (strain K96243)</name>
    <dbReference type="NCBI Taxonomy" id="272560"/>
    <lineage>
        <taxon>Bacteria</taxon>
        <taxon>Pseudomonadati</taxon>
        <taxon>Pseudomonadota</taxon>
        <taxon>Betaproteobacteria</taxon>
        <taxon>Burkholderiales</taxon>
        <taxon>Burkholderiaceae</taxon>
        <taxon>Burkholderia</taxon>
        <taxon>pseudomallei group</taxon>
    </lineage>
</organism>
<evidence type="ECO:0000255" key="1">
    <source>
        <dbReference type="HAMAP-Rule" id="MF_00049"/>
    </source>
</evidence>
<comment type="catalytic activity">
    <reaction evidence="1">
        <text>tRNA(Leu) + L-leucine + ATP = L-leucyl-tRNA(Leu) + AMP + diphosphate</text>
        <dbReference type="Rhea" id="RHEA:11688"/>
        <dbReference type="Rhea" id="RHEA-COMP:9613"/>
        <dbReference type="Rhea" id="RHEA-COMP:9622"/>
        <dbReference type="ChEBI" id="CHEBI:30616"/>
        <dbReference type="ChEBI" id="CHEBI:33019"/>
        <dbReference type="ChEBI" id="CHEBI:57427"/>
        <dbReference type="ChEBI" id="CHEBI:78442"/>
        <dbReference type="ChEBI" id="CHEBI:78494"/>
        <dbReference type="ChEBI" id="CHEBI:456215"/>
        <dbReference type="EC" id="6.1.1.4"/>
    </reaction>
</comment>
<comment type="subcellular location">
    <subcellularLocation>
        <location evidence="1">Cytoplasm</location>
    </subcellularLocation>
</comment>
<comment type="similarity">
    <text evidence="1">Belongs to the class-I aminoacyl-tRNA synthetase family.</text>
</comment>
<keyword id="KW-0030">Aminoacyl-tRNA synthetase</keyword>
<keyword id="KW-0067">ATP-binding</keyword>
<keyword id="KW-0963">Cytoplasm</keyword>
<keyword id="KW-0436">Ligase</keyword>
<keyword id="KW-0547">Nucleotide-binding</keyword>
<keyword id="KW-0648">Protein biosynthesis</keyword>
<keyword id="KW-1185">Reference proteome</keyword>
<sequence length="864" mass="96151">MHERYVPADVEAAAQSDWRAADAYRSKEDANRKKFYCVSMLPYPSGKLHMGHVRNYTINDVMYRYLRMNGYNTLMPMGWDAFGMPAENAAMANGVPPAQWTYENIAYMKKQMQSMGLAIDWSREVTTCKPDYYKWNQWLFLKMLEKGVAYKKTGTVNWDPVDQTVLANEQVIDGRGWRSGALVEKREIPMYYMRITQYADELLNDLDGLGWPERVKVMQHNWIGKSFGVNFGFPYELDGEKKLLRVFTTRADTIMGVTFCAIAAEHPLAARLARDKPALQAFIDECKRGGVAEADIATMEKKGVATGFSVSHPLTGEPVEVWIGNYVLMSYGEGAVMGVPAHDERDFAFAKKYGLPIRQVIAVEGETYSTDAWQEWYGDKTRAVCVNSGKYDGLAHDAAVDAIAAELKAGGLGDKQITYRLRDWGISRQRYWGTPIPIIHCPSCGDVPVPEQDLPVVLPEDLVPDGTGNPLAKSDAFLNCTCPKCGAAAKRETDTMDTFVDSAWYFSRYAAPDAQTMVDARTDYWMPMDQYIGGIEHAILHLLYSRFWAKVMRDLGLVAFGEPAKNLLTQGMVLNETFYREDAAGKKTWYNPADVTVSFDDKGRPVGAVLKSDGQPVELGGIEKMSKSKNNGVDPQMLIDHYGADTARLFTMFAAPPEQQLEWSGAGVDGASRFLRRVWAFGFANREALAVRAPFDAAQLAEADKTLRREIHGVLKQADFDYQRLQYNTVVSAAMKMLNAIEGAKGATPAVLRETYGVLLRVLYPVVPHVTFELWKALGYADEFGPLLDAPWPKVDEAALEQAEIELVLQVNGKVRGALKVAKDASREAIEAAAVADGMFAKFAEGRPAKKIIVVPGRLVNVVV</sequence>
<gene>
    <name evidence="1" type="primary">leuS</name>
    <name type="ordered locus">BPSL2938</name>
</gene>
<reference key="1">
    <citation type="journal article" date="2004" name="Proc. Natl. Acad. Sci. U.S.A.">
        <title>Genomic plasticity of the causative agent of melioidosis, Burkholderia pseudomallei.</title>
        <authorList>
            <person name="Holden M.T.G."/>
            <person name="Titball R.W."/>
            <person name="Peacock S.J."/>
            <person name="Cerdeno-Tarraga A.-M."/>
            <person name="Atkins T."/>
            <person name="Crossman L.C."/>
            <person name="Pitt T."/>
            <person name="Churcher C."/>
            <person name="Mungall K.L."/>
            <person name="Bentley S.D."/>
            <person name="Sebaihia M."/>
            <person name="Thomson N.R."/>
            <person name="Bason N."/>
            <person name="Beacham I.R."/>
            <person name="Brooks K."/>
            <person name="Brown K.A."/>
            <person name="Brown N.F."/>
            <person name="Challis G.L."/>
            <person name="Cherevach I."/>
            <person name="Chillingworth T."/>
            <person name="Cronin A."/>
            <person name="Crossett B."/>
            <person name="Davis P."/>
            <person name="DeShazer D."/>
            <person name="Feltwell T."/>
            <person name="Fraser A."/>
            <person name="Hance Z."/>
            <person name="Hauser H."/>
            <person name="Holroyd S."/>
            <person name="Jagels K."/>
            <person name="Keith K.E."/>
            <person name="Maddison M."/>
            <person name="Moule S."/>
            <person name="Price C."/>
            <person name="Quail M.A."/>
            <person name="Rabbinowitsch E."/>
            <person name="Rutherford K."/>
            <person name="Sanders M."/>
            <person name="Simmonds M."/>
            <person name="Songsivilai S."/>
            <person name="Stevens K."/>
            <person name="Tumapa S."/>
            <person name="Vesaratchavest M."/>
            <person name="Whitehead S."/>
            <person name="Yeats C."/>
            <person name="Barrell B.G."/>
            <person name="Oyston P.C.F."/>
            <person name="Parkhill J."/>
        </authorList>
    </citation>
    <scope>NUCLEOTIDE SEQUENCE [LARGE SCALE GENOMIC DNA]</scope>
    <source>
        <strain>K96243</strain>
    </source>
</reference>
<protein>
    <recommendedName>
        <fullName evidence="1">Leucine--tRNA ligase</fullName>
        <ecNumber evidence="1">6.1.1.4</ecNumber>
    </recommendedName>
    <alternativeName>
        <fullName evidence="1">Leucyl-tRNA synthetase</fullName>
        <shortName evidence="1">LeuRS</shortName>
    </alternativeName>
</protein>
<proteinExistence type="inferred from homology"/>
<dbReference type="EC" id="6.1.1.4" evidence="1"/>
<dbReference type="EMBL" id="BX571965">
    <property type="protein sequence ID" value="CAH36948.1"/>
    <property type="molecule type" value="Genomic_DNA"/>
</dbReference>
<dbReference type="RefSeq" id="WP_004535294.1">
    <property type="nucleotide sequence ID" value="NZ_CP009538.1"/>
</dbReference>
<dbReference type="RefSeq" id="YP_109532.1">
    <property type="nucleotide sequence ID" value="NC_006350.1"/>
</dbReference>
<dbReference type="SMR" id="Q63QT6"/>
<dbReference type="STRING" id="272560.BPSL2938"/>
<dbReference type="GeneID" id="93061536"/>
<dbReference type="KEGG" id="bps:BPSL2938"/>
<dbReference type="PATRIC" id="fig|272560.51.peg.2342"/>
<dbReference type="eggNOG" id="COG0495">
    <property type="taxonomic scope" value="Bacteria"/>
</dbReference>
<dbReference type="Proteomes" id="UP000000605">
    <property type="component" value="Chromosome 1"/>
</dbReference>
<dbReference type="GO" id="GO:0005829">
    <property type="term" value="C:cytosol"/>
    <property type="evidence" value="ECO:0007669"/>
    <property type="project" value="TreeGrafter"/>
</dbReference>
<dbReference type="GO" id="GO:0002161">
    <property type="term" value="F:aminoacyl-tRNA deacylase activity"/>
    <property type="evidence" value="ECO:0007669"/>
    <property type="project" value="InterPro"/>
</dbReference>
<dbReference type="GO" id="GO:0005524">
    <property type="term" value="F:ATP binding"/>
    <property type="evidence" value="ECO:0007669"/>
    <property type="project" value="UniProtKB-UniRule"/>
</dbReference>
<dbReference type="GO" id="GO:0004823">
    <property type="term" value="F:leucine-tRNA ligase activity"/>
    <property type="evidence" value="ECO:0007669"/>
    <property type="project" value="UniProtKB-UniRule"/>
</dbReference>
<dbReference type="GO" id="GO:0006429">
    <property type="term" value="P:leucyl-tRNA aminoacylation"/>
    <property type="evidence" value="ECO:0007669"/>
    <property type="project" value="UniProtKB-UniRule"/>
</dbReference>
<dbReference type="CDD" id="cd07958">
    <property type="entry name" value="Anticodon_Ia_Leu_BEm"/>
    <property type="match status" value="1"/>
</dbReference>
<dbReference type="CDD" id="cd00812">
    <property type="entry name" value="LeuRS_core"/>
    <property type="match status" value="1"/>
</dbReference>
<dbReference type="FunFam" id="1.10.730.10:FF:000002">
    <property type="entry name" value="Leucine--tRNA ligase"/>
    <property type="match status" value="1"/>
</dbReference>
<dbReference type="FunFam" id="2.20.28.290:FF:000001">
    <property type="entry name" value="Leucine--tRNA ligase"/>
    <property type="match status" value="1"/>
</dbReference>
<dbReference type="FunFam" id="3.40.50.620:FF:000003">
    <property type="entry name" value="Leucine--tRNA ligase"/>
    <property type="match status" value="1"/>
</dbReference>
<dbReference type="FunFam" id="3.40.50.620:FF:000056">
    <property type="entry name" value="Leucine--tRNA ligase"/>
    <property type="match status" value="1"/>
</dbReference>
<dbReference type="FunFam" id="3.90.740.10:FF:000012">
    <property type="entry name" value="Leucine--tRNA ligase"/>
    <property type="match status" value="1"/>
</dbReference>
<dbReference type="Gene3D" id="2.20.28.290">
    <property type="match status" value="1"/>
</dbReference>
<dbReference type="Gene3D" id="3.10.20.590">
    <property type="match status" value="1"/>
</dbReference>
<dbReference type="Gene3D" id="3.40.50.620">
    <property type="entry name" value="HUPs"/>
    <property type="match status" value="2"/>
</dbReference>
<dbReference type="Gene3D" id="1.10.730.10">
    <property type="entry name" value="Isoleucyl-tRNA Synthetase, Domain 1"/>
    <property type="match status" value="1"/>
</dbReference>
<dbReference type="Gene3D" id="3.90.740.10">
    <property type="entry name" value="Valyl/Leucyl/Isoleucyl-tRNA synthetase, editing domain"/>
    <property type="match status" value="1"/>
</dbReference>
<dbReference type="HAMAP" id="MF_00049_B">
    <property type="entry name" value="Leu_tRNA_synth_B"/>
    <property type="match status" value="1"/>
</dbReference>
<dbReference type="InterPro" id="IPR001412">
    <property type="entry name" value="aa-tRNA-synth_I_CS"/>
</dbReference>
<dbReference type="InterPro" id="IPR002300">
    <property type="entry name" value="aa-tRNA-synth_Ia"/>
</dbReference>
<dbReference type="InterPro" id="IPR002302">
    <property type="entry name" value="Leu-tRNA-ligase"/>
</dbReference>
<dbReference type="InterPro" id="IPR025709">
    <property type="entry name" value="Leu_tRNA-synth_edit"/>
</dbReference>
<dbReference type="InterPro" id="IPR013155">
    <property type="entry name" value="M/V/L/I-tRNA-synth_anticd-bd"/>
</dbReference>
<dbReference type="InterPro" id="IPR015413">
    <property type="entry name" value="Methionyl/Leucyl_tRNA_Synth"/>
</dbReference>
<dbReference type="InterPro" id="IPR014729">
    <property type="entry name" value="Rossmann-like_a/b/a_fold"/>
</dbReference>
<dbReference type="InterPro" id="IPR009080">
    <property type="entry name" value="tRNAsynth_Ia_anticodon-bd"/>
</dbReference>
<dbReference type="InterPro" id="IPR009008">
    <property type="entry name" value="Val/Leu/Ile-tRNA-synth_edit"/>
</dbReference>
<dbReference type="NCBIfam" id="TIGR00396">
    <property type="entry name" value="leuS_bact"/>
    <property type="match status" value="1"/>
</dbReference>
<dbReference type="PANTHER" id="PTHR43740:SF2">
    <property type="entry name" value="LEUCINE--TRNA LIGASE, MITOCHONDRIAL"/>
    <property type="match status" value="1"/>
</dbReference>
<dbReference type="PANTHER" id="PTHR43740">
    <property type="entry name" value="LEUCYL-TRNA SYNTHETASE"/>
    <property type="match status" value="1"/>
</dbReference>
<dbReference type="Pfam" id="PF08264">
    <property type="entry name" value="Anticodon_1"/>
    <property type="match status" value="1"/>
</dbReference>
<dbReference type="Pfam" id="PF00133">
    <property type="entry name" value="tRNA-synt_1"/>
    <property type="match status" value="2"/>
</dbReference>
<dbReference type="Pfam" id="PF13603">
    <property type="entry name" value="tRNA-synt_1_2"/>
    <property type="match status" value="1"/>
</dbReference>
<dbReference type="Pfam" id="PF09334">
    <property type="entry name" value="tRNA-synt_1g"/>
    <property type="match status" value="1"/>
</dbReference>
<dbReference type="PRINTS" id="PR00985">
    <property type="entry name" value="TRNASYNTHLEU"/>
</dbReference>
<dbReference type="SUPFAM" id="SSF47323">
    <property type="entry name" value="Anticodon-binding domain of a subclass of class I aminoacyl-tRNA synthetases"/>
    <property type="match status" value="1"/>
</dbReference>
<dbReference type="SUPFAM" id="SSF52374">
    <property type="entry name" value="Nucleotidylyl transferase"/>
    <property type="match status" value="1"/>
</dbReference>
<dbReference type="SUPFAM" id="SSF50677">
    <property type="entry name" value="ValRS/IleRS/LeuRS editing domain"/>
    <property type="match status" value="1"/>
</dbReference>
<dbReference type="PROSITE" id="PS00178">
    <property type="entry name" value="AA_TRNA_LIGASE_I"/>
    <property type="match status" value="1"/>
</dbReference>
<name>SYL_BURPS</name>
<accession>Q63QT6</accession>